<proteinExistence type="inferred from homology"/>
<keyword id="KW-0067">ATP-binding</keyword>
<keyword id="KW-0997">Cell inner membrane</keyword>
<keyword id="KW-1003">Cell membrane</keyword>
<keyword id="KW-0472">Membrane</keyword>
<keyword id="KW-0547">Nucleotide-binding</keyword>
<keyword id="KW-0764">Sulfate transport</keyword>
<keyword id="KW-1278">Translocase</keyword>
<keyword id="KW-0813">Transport</keyword>
<dbReference type="EC" id="7.3.2.3" evidence="1"/>
<dbReference type="EMBL" id="CR543861">
    <property type="protein sequence ID" value="CAG69357.1"/>
    <property type="molecule type" value="Genomic_DNA"/>
</dbReference>
<dbReference type="RefSeq" id="WP_004928769.1">
    <property type="nucleotide sequence ID" value="NC_005966.1"/>
</dbReference>
<dbReference type="SMR" id="Q6F9A8"/>
<dbReference type="STRING" id="202950.GCA_001485005_01423"/>
<dbReference type="GeneID" id="45234878"/>
<dbReference type="KEGG" id="aci:ACIAD2596"/>
<dbReference type="eggNOG" id="COG1118">
    <property type="taxonomic scope" value="Bacteria"/>
</dbReference>
<dbReference type="HOGENOM" id="CLU_000604_1_1_6"/>
<dbReference type="OrthoDB" id="9802264at2"/>
<dbReference type="BioCyc" id="ASP62977:ACIAD_RS11805-MONOMER"/>
<dbReference type="Proteomes" id="UP000000430">
    <property type="component" value="Chromosome"/>
</dbReference>
<dbReference type="GO" id="GO:0043190">
    <property type="term" value="C:ATP-binding cassette (ABC) transporter complex"/>
    <property type="evidence" value="ECO:0007669"/>
    <property type="project" value="InterPro"/>
</dbReference>
<dbReference type="GO" id="GO:0015419">
    <property type="term" value="F:ABC-type sulfate transporter activity"/>
    <property type="evidence" value="ECO:0007669"/>
    <property type="project" value="InterPro"/>
</dbReference>
<dbReference type="GO" id="GO:0102025">
    <property type="term" value="F:ABC-type thiosulfate transporter activity"/>
    <property type="evidence" value="ECO:0007669"/>
    <property type="project" value="RHEA"/>
</dbReference>
<dbReference type="GO" id="GO:0005524">
    <property type="term" value="F:ATP binding"/>
    <property type="evidence" value="ECO:0007669"/>
    <property type="project" value="UniProtKB-KW"/>
</dbReference>
<dbReference type="GO" id="GO:0016887">
    <property type="term" value="F:ATP hydrolysis activity"/>
    <property type="evidence" value="ECO:0007669"/>
    <property type="project" value="InterPro"/>
</dbReference>
<dbReference type="CDD" id="cd03296">
    <property type="entry name" value="ABC_CysA_sulfate_importer"/>
    <property type="match status" value="1"/>
</dbReference>
<dbReference type="FunFam" id="3.40.50.300:FF:000227">
    <property type="entry name" value="Sulfate/thiosulfate import ATP-binding protein CysA"/>
    <property type="match status" value="1"/>
</dbReference>
<dbReference type="Gene3D" id="3.40.50.300">
    <property type="entry name" value="P-loop containing nucleotide triphosphate hydrolases"/>
    <property type="match status" value="1"/>
</dbReference>
<dbReference type="InterPro" id="IPR003593">
    <property type="entry name" value="AAA+_ATPase"/>
</dbReference>
<dbReference type="InterPro" id="IPR050093">
    <property type="entry name" value="ABC_SmlMolc_Importer"/>
</dbReference>
<dbReference type="InterPro" id="IPR003439">
    <property type="entry name" value="ABC_transporter-like_ATP-bd"/>
</dbReference>
<dbReference type="InterPro" id="IPR017871">
    <property type="entry name" value="ABC_transporter-like_CS"/>
</dbReference>
<dbReference type="InterPro" id="IPR008995">
    <property type="entry name" value="Mo/tungstate-bd_C_term_dom"/>
</dbReference>
<dbReference type="InterPro" id="IPR027417">
    <property type="entry name" value="P-loop_NTPase"/>
</dbReference>
<dbReference type="InterPro" id="IPR005666">
    <property type="entry name" value="Sulph_transpt1"/>
</dbReference>
<dbReference type="InterPro" id="IPR024765">
    <property type="entry name" value="TOBE-like"/>
</dbReference>
<dbReference type="NCBIfam" id="TIGR00968">
    <property type="entry name" value="3a0106s01"/>
    <property type="match status" value="1"/>
</dbReference>
<dbReference type="PANTHER" id="PTHR42781">
    <property type="entry name" value="SPERMIDINE/PUTRESCINE IMPORT ATP-BINDING PROTEIN POTA"/>
    <property type="match status" value="1"/>
</dbReference>
<dbReference type="PANTHER" id="PTHR42781:SF4">
    <property type="entry name" value="SPERMIDINE_PUTRESCINE IMPORT ATP-BINDING PROTEIN POTA"/>
    <property type="match status" value="1"/>
</dbReference>
<dbReference type="Pfam" id="PF00005">
    <property type="entry name" value="ABC_tran"/>
    <property type="match status" value="1"/>
</dbReference>
<dbReference type="Pfam" id="PF12857">
    <property type="entry name" value="TOBE_3"/>
    <property type="match status" value="1"/>
</dbReference>
<dbReference type="SMART" id="SM00382">
    <property type="entry name" value="AAA"/>
    <property type="match status" value="1"/>
</dbReference>
<dbReference type="SUPFAM" id="SSF50331">
    <property type="entry name" value="MOP-like"/>
    <property type="match status" value="1"/>
</dbReference>
<dbReference type="SUPFAM" id="SSF52540">
    <property type="entry name" value="P-loop containing nucleoside triphosphate hydrolases"/>
    <property type="match status" value="1"/>
</dbReference>
<dbReference type="PROSITE" id="PS00211">
    <property type="entry name" value="ABC_TRANSPORTER_1"/>
    <property type="match status" value="1"/>
</dbReference>
<dbReference type="PROSITE" id="PS50893">
    <property type="entry name" value="ABC_TRANSPORTER_2"/>
    <property type="match status" value="1"/>
</dbReference>
<dbReference type="PROSITE" id="PS51237">
    <property type="entry name" value="CYSA"/>
    <property type="match status" value="1"/>
</dbReference>
<accession>Q6F9A8</accession>
<gene>
    <name evidence="1" type="primary">cysA</name>
    <name type="ordered locus">ACIAD2596</name>
</gene>
<protein>
    <recommendedName>
        <fullName evidence="1">Sulfate/thiosulfate import ATP-binding protein CysA</fullName>
        <ecNumber evidence="1">7.3.2.3</ecNumber>
    </recommendedName>
    <alternativeName>
        <fullName evidence="1">Sulfate-transporting ATPase</fullName>
    </alternativeName>
</protein>
<feature type="chain" id="PRO_0000092248" description="Sulfate/thiosulfate import ATP-binding protein CysA">
    <location>
        <begin position="1"/>
        <end position="353"/>
    </location>
</feature>
<feature type="domain" description="ABC transporter" evidence="1">
    <location>
        <begin position="3"/>
        <end position="237"/>
    </location>
</feature>
<feature type="binding site" evidence="1">
    <location>
        <begin position="35"/>
        <end position="42"/>
    </location>
    <ligand>
        <name>ATP</name>
        <dbReference type="ChEBI" id="CHEBI:30616"/>
    </ligand>
</feature>
<reference key="1">
    <citation type="journal article" date="2004" name="Nucleic Acids Res.">
        <title>Unique features revealed by the genome sequence of Acinetobacter sp. ADP1, a versatile and naturally transformation competent bacterium.</title>
        <authorList>
            <person name="Barbe V."/>
            <person name="Vallenet D."/>
            <person name="Fonknechten N."/>
            <person name="Kreimeyer A."/>
            <person name="Oztas S."/>
            <person name="Labarre L."/>
            <person name="Cruveiller S."/>
            <person name="Robert C."/>
            <person name="Duprat S."/>
            <person name="Wincker P."/>
            <person name="Ornston L.N."/>
            <person name="Weissenbach J."/>
            <person name="Marliere P."/>
            <person name="Cohen G.N."/>
            <person name="Medigue C."/>
        </authorList>
    </citation>
    <scope>NUCLEOTIDE SEQUENCE [LARGE SCALE GENOMIC DNA]</scope>
    <source>
        <strain>ATCC 33305 / BD413 / ADP1</strain>
    </source>
</reference>
<comment type="function">
    <text evidence="1">Part of the ABC transporter complex CysAWTP involved in sulfate/thiosulfate import. Responsible for energy coupling to the transport system.</text>
</comment>
<comment type="catalytic activity">
    <reaction evidence="1">
        <text>sulfate(out) + ATP + H2O = sulfate(in) + ADP + phosphate + H(+)</text>
        <dbReference type="Rhea" id="RHEA:10192"/>
        <dbReference type="ChEBI" id="CHEBI:15377"/>
        <dbReference type="ChEBI" id="CHEBI:15378"/>
        <dbReference type="ChEBI" id="CHEBI:16189"/>
        <dbReference type="ChEBI" id="CHEBI:30616"/>
        <dbReference type="ChEBI" id="CHEBI:43474"/>
        <dbReference type="ChEBI" id="CHEBI:456216"/>
        <dbReference type="EC" id="7.3.2.3"/>
    </reaction>
</comment>
<comment type="catalytic activity">
    <reaction evidence="1">
        <text>thiosulfate(out) + ATP + H2O = thiosulfate(in) + ADP + phosphate + H(+)</text>
        <dbReference type="Rhea" id="RHEA:29871"/>
        <dbReference type="ChEBI" id="CHEBI:15377"/>
        <dbReference type="ChEBI" id="CHEBI:15378"/>
        <dbReference type="ChEBI" id="CHEBI:30616"/>
        <dbReference type="ChEBI" id="CHEBI:33542"/>
        <dbReference type="ChEBI" id="CHEBI:43474"/>
        <dbReference type="ChEBI" id="CHEBI:456216"/>
        <dbReference type="EC" id="7.3.2.3"/>
    </reaction>
</comment>
<comment type="subunit">
    <text evidence="1">The complex is composed of two ATP-binding proteins (CysA), two transmembrane proteins (CysT and CysW) and a solute-binding protein (CysP).</text>
</comment>
<comment type="subcellular location">
    <subcellularLocation>
        <location evidence="1">Cell inner membrane</location>
        <topology evidence="1">Peripheral membrane protein</topology>
    </subcellularLocation>
</comment>
<comment type="similarity">
    <text evidence="1">Belongs to the ABC transporter superfamily. Sulfate/tungstate importer (TC 3.A.1.6) family.</text>
</comment>
<sequence>MSIQVKNIEKHFGAFHALKNISLDFPEGQLVALLGPSGCGKTTLLRIIAGLESADEGKILLEGADATNIHVRERQVGFVFQHYALFRHMSVFDNIAFGLRVRPRSTRPSEAEIKKRVTRLLDLVQLGFLADRYPSQLSGGQRQRIALARALAVEPRVLLLDEPFGALDAKVRKELRRWLRTLHDELHITSIFVTHDQEEALEVADQIIVMNKGNVEQIGSPREVYEKPATPFVFDFLGQANRFDGQYHENKVELGEDQIILPNVSEVPHGKVIAFARPDELHIHAQPQDNTIQATFLREVWIAGKVVAELQDRNGRLIEIALSPDEARLHLFRPNQTVWISVSQLHLFADHVA</sequence>
<name>CYSA_ACIAD</name>
<organism>
    <name type="scientific">Acinetobacter baylyi (strain ATCC 33305 / BD413 / ADP1)</name>
    <dbReference type="NCBI Taxonomy" id="62977"/>
    <lineage>
        <taxon>Bacteria</taxon>
        <taxon>Pseudomonadati</taxon>
        <taxon>Pseudomonadota</taxon>
        <taxon>Gammaproteobacteria</taxon>
        <taxon>Moraxellales</taxon>
        <taxon>Moraxellaceae</taxon>
        <taxon>Acinetobacter</taxon>
    </lineage>
</organism>
<evidence type="ECO:0000255" key="1">
    <source>
        <dbReference type="HAMAP-Rule" id="MF_01701"/>
    </source>
</evidence>